<sequence>MAYKHILIAVDLSPESKVLVEKAVSMARPYNAKVSLIHVDVNYSDLYTGLIDVNLGDMQKRISEETHHALTELSTNAGYPITETLSGSGDLGQVLVDAIKKYDMDLVVCGHHQDFWSKLMSSARQLINTVHVDMLIVPLRDEEE</sequence>
<protein>
    <recommendedName>
        <fullName>Universal stress protein A</fullName>
    </recommendedName>
</protein>
<keyword id="KW-0963">Cytoplasm</keyword>
<keyword id="KW-0597">Phosphoprotein</keyword>
<keyword id="KW-1185">Reference proteome</keyword>
<comment type="function">
    <text evidence="1">Required for resistance to DNA-damaging agents.</text>
</comment>
<comment type="subunit">
    <text evidence="1">Homodimer.</text>
</comment>
<comment type="subcellular location">
    <subcellularLocation>
        <location evidence="1">Cytoplasm</location>
    </subcellularLocation>
</comment>
<comment type="similarity">
    <text evidence="2">Belongs to the universal stress protein A family.</text>
</comment>
<reference key="1">
    <citation type="journal article" date="2002" name="Nucleic Acids Res.">
        <title>Genome sequence of Shigella flexneri 2a: insights into pathogenicity through comparison with genomes of Escherichia coli K12 and O157.</title>
        <authorList>
            <person name="Jin Q."/>
            <person name="Yuan Z."/>
            <person name="Xu J."/>
            <person name="Wang Y."/>
            <person name="Shen Y."/>
            <person name="Lu W."/>
            <person name="Wang J."/>
            <person name="Liu H."/>
            <person name="Yang J."/>
            <person name="Yang F."/>
            <person name="Zhang X."/>
            <person name="Zhang J."/>
            <person name="Yang G."/>
            <person name="Wu H."/>
            <person name="Qu D."/>
            <person name="Dong J."/>
            <person name="Sun L."/>
            <person name="Xue Y."/>
            <person name="Zhao A."/>
            <person name="Gao Y."/>
            <person name="Zhu J."/>
            <person name="Kan B."/>
            <person name="Ding K."/>
            <person name="Chen S."/>
            <person name="Cheng H."/>
            <person name="Yao Z."/>
            <person name="He B."/>
            <person name="Chen R."/>
            <person name="Ma D."/>
            <person name="Qiang B."/>
            <person name="Wen Y."/>
            <person name="Hou Y."/>
            <person name="Yu J."/>
        </authorList>
    </citation>
    <scope>NUCLEOTIDE SEQUENCE [LARGE SCALE GENOMIC DNA]</scope>
    <source>
        <strain>301 / Serotype 2a</strain>
    </source>
</reference>
<reference key="2">
    <citation type="journal article" date="2003" name="Infect. Immun.">
        <title>Complete genome sequence and comparative genomics of Shigella flexneri serotype 2a strain 2457T.</title>
        <authorList>
            <person name="Wei J."/>
            <person name="Goldberg M.B."/>
            <person name="Burland V."/>
            <person name="Venkatesan M.M."/>
            <person name="Deng W."/>
            <person name="Fournier G."/>
            <person name="Mayhew G.F."/>
            <person name="Plunkett G. III"/>
            <person name="Rose D.J."/>
            <person name="Darling A."/>
            <person name="Mau B."/>
            <person name="Perna N.T."/>
            <person name="Payne S.M."/>
            <person name="Runyen-Janecky L.J."/>
            <person name="Zhou S."/>
            <person name="Schwartz D.C."/>
            <person name="Blattner F.R."/>
        </authorList>
    </citation>
    <scope>NUCLEOTIDE SEQUENCE [LARGE SCALE GENOMIC DNA]</scope>
    <source>
        <strain>ATCC 700930 / 2457T / Serotype 2a</strain>
    </source>
</reference>
<dbReference type="EMBL" id="AE005674">
    <property type="protein sequence ID" value="AAN44983.1"/>
    <property type="molecule type" value="Genomic_DNA"/>
</dbReference>
<dbReference type="EMBL" id="AE014073">
    <property type="protein sequence ID" value="AAP19203.1"/>
    <property type="molecule type" value="Genomic_DNA"/>
</dbReference>
<dbReference type="RefSeq" id="NP_709276.1">
    <property type="nucleotide sequence ID" value="NC_004337.2"/>
</dbReference>
<dbReference type="RefSeq" id="WP_000323571.1">
    <property type="nucleotide sequence ID" value="NZ_WPGW01000101.1"/>
</dbReference>
<dbReference type="SMR" id="P0AED3"/>
<dbReference type="STRING" id="198214.SF3526"/>
<dbReference type="PaxDb" id="198214-SF3526"/>
<dbReference type="GeneID" id="1026368"/>
<dbReference type="GeneID" id="93778498"/>
<dbReference type="KEGG" id="sfl:SF3526"/>
<dbReference type="KEGG" id="sfx:S4242"/>
<dbReference type="PATRIC" id="fig|198214.7.peg.4150"/>
<dbReference type="HOGENOM" id="CLU_049301_18_0_6"/>
<dbReference type="Proteomes" id="UP000001006">
    <property type="component" value="Chromosome"/>
</dbReference>
<dbReference type="Proteomes" id="UP000002673">
    <property type="component" value="Chromosome"/>
</dbReference>
<dbReference type="GO" id="GO:0005737">
    <property type="term" value="C:cytoplasm"/>
    <property type="evidence" value="ECO:0007669"/>
    <property type="project" value="UniProtKB-SubCell"/>
</dbReference>
<dbReference type="CDD" id="cd23657">
    <property type="entry name" value="USP-A-like"/>
    <property type="match status" value="1"/>
</dbReference>
<dbReference type="FunFam" id="3.40.50.620:FF:000014">
    <property type="entry name" value="Universal stress protein"/>
    <property type="match status" value="1"/>
</dbReference>
<dbReference type="Gene3D" id="3.40.50.620">
    <property type="entry name" value="HUPs"/>
    <property type="match status" value="1"/>
</dbReference>
<dbReference type="InterPro" id="IPR014729">
    <property type="entry name" value="Rossmann-like_a/b/a_fold"/>
</dbReference>
<dbReference type="InterPro" id="IPR006015">
    <property type="entry name" value="Universal_stress_UspA"/>
</dbReference>
<dbReference type="InterPro" id="IPR006016">
    <property type="entry name" value="UspA"/>
</dbReference>
<dbReference type="NCBIfam" id="NF011698">
    <property type="entry name" value="PRK15118.1"/>
    <property type="match status" value="1"/>
</dbReference>
<dbReference type="PANTHER" id="PTHR46268">
    <property type="entry name" value="STRESS RESPONSE PROTEIN NHAX"/>
    <property type="match status" value="1"/>
</dbReference>
<dbReference type="PANTHER" id="PTHR46268:SF23">
    <property type="entry name" value="UNIVERSAL STRESS PROTEIN A-RELATED"/>
    <property type="match status" value="1"/>
</dbReference>
<dbReference type="Pfam" id="PF00582">
    <property type="entry name" value="Usp"/>
    <property type="match status" value="1"/>
</dbReference>
<dbReference type="PIRSF" id="PIRSF006276">
    <property type="entry name" value="UspA"/>
    <property type="match status" value="1"/>
</dbReference>
<dbReference type="SUPFAM" id="SSF52402">
    <property type="entry name" value="Adenine nucleotide alpha hydrolases-like"/>
    <property type="match status" value="1"/>
</dbReference>
<organism>
    <name type="scientific">Shigella flexneri</name>
    <dbReference type="NCBI Taxonomy" id="623"/>
    <lineage>
        <taxon>Bacteria</taxon>
        <taxon>Pseudomonadati</taxon>
        <taxon>Pseudomonadota</taxon>
        <taxon>Gammaproteobacteria</taxon>
        <taxon>Enterobacterales</taxon>
        <taxon>Enterobacteriaceae</taxon>
        <taxon>Shigella</taxon>
    </lineage>
</organism>
<proteinExistence type="inferred from homology"/>
<gene>
    <name type="primary">uspA</name>
    <name type="ordered locus">SF3526</name>
    <name type="ordered locus">S4242</name>
</gene>
<name>USPA_SHIFL</name>
<accession>P0AED3</accession>
<accession>P28242</accession>
<evidence type="ECO:0000250" key="1"/>
<evidence type="ECO:0000305" key="2"/>
<feature type="initiator methionine" description="Removed" evidence="1">
    <location>
        <position position="1"/>
    </location>
</feature>
<feature type="chain" id="PRO_0000147405" description="Universal stress protein A">
    <location>
        <begin position="2"/>
        <end position="144"/>
    </location>
</feature>